<evidence type="ECO:0000250" key="1"/>
<evidence type="ECO:0000255" key="2"/>
<evidence type="ECO:0000255" key="3">
    <source>
        <dbReference type="PROSITE-ProRule" id="PRU00794"/>
    </source>
</evidence>
<evidence type="ECO:0000269" key="4">
    <source>
    </source>
</evidence>
<evidence type="ECO:0000305" key="5"/>
<evidence type="ECO:0007829" key="6">
    <source>
        <dbReference type="PDB" id="2PNY"/>
    </source>
</evidence>
<dbReference type="EC" id="5.3.3.2" evidence="4"/>
<dbReference type="EMBL" id="AF291755">
    <property type="protein sequence ID" value="AAK29358.1"/>
    <property type="molecule type" value="Genomic_DNA"/>
</dbReference>
<dbReference type="EMBL" id="AF271729">
    <property type="protein sequence ID" value="AAK49436.1"/>
    <property type="molecule type" value="Genomic_DNA"/>
</dbReference>
<dbReference type="EMBL" id="AF271726">
    <property type="protein sequence ID" value="AAK49436.1"/>
    <property type="status" value="JOINED"/>
    <property type="molecule type" value="Genomic_DNA"/>
</dbReference>
<dbReference type="EMBL" id="AF271727">
    <property type="protein sequence ID" value="AAK49436.1"/>
    <property type="status" value="JOINED"/>
    <property type="molecule type" value="Genomic_DNA"/>
</dbReference>
<dbReference type="EMBL" id="AF271728">
    <property type="protein sequence ID" value="AAK49436.1"/>
    <property type="status" value="JOINED"/>
    <property type="molecule type" value="Genomic_DNA"/>
</dbReference>
<dbReference type="EMBL" id="AF271725">
    <property type="protein sequence ID" value="AAK49437.1"/>
    <property type="molecule type" value="mRNA"/>
</dbReference>
<dbReference type="EMBL" id="AK056950">
    <property type="protein sequence ID" value="BAB71322.1"/>
    <property type="molecule type" value="mRNA"/>
</dbReference>
<dbReference type="EMBL" id="BC017778">
    <property type="protein sequence ID" value="AAH17778.1"/>
    <property type="molecule type" value="mRNA"/>
</dbReference>
<dbReference type="CCDS" id="CCDS7055.1"/>
<dbReference type="RefSeq" id="NP_150286.1">
    <property type="nucleotide sequence ID" value="NM_033261.3"/>
</dbReference>
<dbReference type="PDB" id="2PNY">
    <property type="method" value="X-ray"/>
    <property type="resolution" value="1.81 A"/>
    <property type="chains" value="A=1-227"/>
</dbReference>
<dbReference type="PDBsum" id="2PNY"/>
<dbReference type="SMR" id="Q9BXS1"/>
<dbReference type="BioGRID" id="124870">
    <property type="interactions" value="13"/>
</dbReference>
<dbReference type="FunCoup" id="Q9BXS1">
    <property type="interactions" value="317"/>
</dbReference>
<dbReference type="IntAct" id="Q9BXS1">
    <property type="interactions" value="14"/>
</dbReference>
<dbReference type="STRING" id="9606.ENSP00000277517"/>
<dbReference type="SwissLipids" id="SLP:000001268"/>
<dbReference type="iPTMnet" id="Q9BXS1"/>
<dbReference type="PhosphoSitePlus" id="Q9BXS1"/>
<dbReference type="BioMuta" id="IDI2"/>
<dbReference type="DMDM" id="20978506"/>
<dbReference type="jPOST" id="Q9BXS1"/>
<dbReference type="MassIVE" id="Q9BXS1"/>
<dbReference type="PaxDb" id="9606-ENSP00000277517"/>
<dbReference type="PeptideAtlas" id="Q9BXS1"/>
<dbReference type="Antibodypedia" id="23799">
    <property type="antibodies" value="110 antibodies from 19 providers"/>
</dbReference>
<dbReference type="DNASU" id="91734"/>
<dbReference type="Ensembl" id="ENST00000277517.2">
    <property type="protein sequence ID" value="ENSP00000277517.1"/>
    <property type="gene ID" value="ENSG00000148377.6"/>
</dbReference>
<dbReference type="GeneID" id="91734"/>
<dbReference type="KEGG" id="hsa:91734"/>
<dbReference type="MANE-Select" id="ENST00000277517.2">
    <property type="protein sequence ID" value="ENSP00000277517.1"/>
    <property type="RefSeq nucleotide sequence ID" value="NM_033261.3"/>
    <property type="RefSeq protein sequence ID" value="NP_150286.1"/>
</dbReference>
<dbReference type="UCSC" id="uc001ifv.1">
    <property type="organism name" value="human"/>
</dbReference>
<dbReference type="AGR" id="HGNC:23487"/>
<dbReference type="CTD" id="91734"/>
<dbReference type="DisGeNET" id="91734"/>
<dbReference type="GeneCards" id="IDI2"/>
<dbReference type="HGNC" id="HGNC:23487">
    <property type="gene designation" value="IDI2"/>
</dbReference>
<dbReference type="HPA" id="ENSG00000148377">
    <property type="expression patterns" value="Tissue enriched (skeletal)"/>
</dbReference>
<dbReference type="MIM" id="615389">
    <property type="type" value="gene"/>
</dbReference>
<dbReference type="neXtProt" id="NX_Q9BXS1"/>
<dbReference type="OpenTargets" id="ENSG00000148377"/>
<dbReference type="PharmGKB" id="PA134935136"/>
<dbReference type="VEuPathDB" id="HostDB:ENSG00000148377"/>
<dbReference type="eggNOG" id="KOG0142">
    <property type="taxonomic scope" value="Eukaryota"/>
</dbReference>
<dbReference type="GeneTree" id="ENSGT00390000008527"/>
<dbReference type="HOGENOM" id="CLU_060552_0_1_1"/>
<dbReference type="InParanoid" id="Q9BXS1"/>
<dbReference type="OMA" id="GEHEICY"/>
<dbReference type="OrthoDB" id="510307at2759"/>
<dbReference type="PAN-GO" id="Q9BXS1">
    <property type="GO annotations" value="3 GO annotations based on evolutionary models"/>
</dbReference>
<dbReference type="PhylomeDB" id="Q9BXS1"/>
<dbReference type="TreeFam" id="TF300129"/>
<dbReference type="BioCyc" id="MetaCyc:HS07522-MONOMER"/>
<dbReference type="PathwayCommons" id="Q9BXS1"/>
<dbReference type="Reactome" id="R-HSA-191273">
    <property type="pathway name" value="Cholesterol biosynthesis"/>
</dbReference>
<dbReference type="SABIO-RK" id="Q9BXS1"/>
<dbReference type="SignaLink" id="Q9BXS1"/>
<dbReference type="UniPathway" id="UPA00059">
    <property type="reaction ID" value="UER00104"/>
</dbReference>
<dbReference type="BioGRID-ORCS" id="91734">
    <property type="hits" value="66 hits in 1150 CRISPR screens"/>
</dbReference>
<dbReference type="EvolutionaryTrace" id="Q9BXS1"/>
<dbReference type="GenomeRNAi" id="91734"/>
<dbReference type="Pharos" id="Q9BXS1">
    <property type="development level" value="Tbio"/>
</dbReference>
<dbReference type="PRO" id="PR:Q9BXS1"/>
<dbReference type="Proteomes" id="UP000005640">
    <property type="component" value="Chromosome 10"/>
</dbReference>
<dbReference type="RNAct" id="Q9BXS1">
    <property type="molecule type" value="protein"/>
</dbReference>
<dbReference type="Bgee" id="ENSG00000148377">
    <property type="expression patterns" value="Expressed in hindlimb stylopod muscle and 69 other cell types or tissues"/>
</dbReference>
<dbReference type="GO" id="GO:0005737">
    <property type="term" value="C:cytoplasm"/>
    <property type="evidence" value="ECO:0000318"/>
    <property type="project" value="GO_Central"/>
</dbReference>
<dbReference type="GO" id="GO:0005829">
    <property type="term" value="C:cytosol"/>
    <property type="evidence" value="ECO:0000304"/>
    <property type="project" value="Reactome"/>
</dbReference>
<dbReference type="GO" id="GO:0043231">
    <property type="term" value="C:intracellular membrane-bounded organelle"/>
    <property type="evidence" value="ECO:0000314"/>
    <property type="project" value="HPA"/>
</dbReference>
<dbReference type="GO" id="GO:0005777">
    <property type="term" value="C:peroxisome"/>
    <property type="evidence" value="ECO:0000314"/>
    <property type="project" value="UniProtKB"/>
</dbReference>
<dbReference type="GO" id="GO:0004452">
    <property type="term" value="F:isopentenyl-diphosphate delta-isomerase activity"/>
    <property type="evidence" value="ECO:0000314"/>
    <property type="project" value="UniProtKB"/>
</dbReference>
<dbReference type="GO" id="GO:0046872">
    <property type="term" value="F:metal ion binding"/>
    <property type="evidence" value="ECO:0007669"/>
    <property type="project" value="UniProtKB-KW"/>
</dbReference>
<dbReference type="GO" id="GO:0006695">
    <property type="term" value="P:cholesterol biosynthetic process"/>
    <property type="evidence" value="ECO:0007669"/>
    <property type="project" value="UniProtKB-KW"/>
</dbReference>
<dbReference type="GO" id="GO:0050992">
    <property type="term" value="P:dimethylallyl diphosphate biosynthetic process"/>
    <property type="evidence" value="ECO:0007669"/>
    <property type="project" value="UniProtKB-UniPathway"/>
</dbReference>
<dbReference type="GO" id="GO:0009240">
    <property type="term" value="P:isopentenyl diphosphate biosynthetic process"/>
    <property type="evidence" value="ECO:0000318"/>
    <property type="project" value="GO_Central"/>
</dbReference>
<dbReference type="GO" id="GO:0046490">
    <property type="term" value="P:isopentenyl diphosphate metabolic process"/>
    <property type="evidence" value="ECO:0000314"/>
    <property type="project" value="MGI"/>
</dbReference>
<dbReference type="GO" id="GO:0008299">
    <property type="term" value="P:isoprenoid biosynthetic process"/>
    <property type="evidence" value="ECO:0000314"/>
    <property type="project" value="UniProtKB"/>
</dbReference>
<dbReference type="CDD" id="cd02885">
    <property type="entry name" value="NUDIX_IPP_Isomerase"/>
    <property type="match status" value="1"/>
</dbReference>
<dbReference type="FunFam" id="3.90.79.10:FF:000012">
    <property type="entry name" value="Isopentenyl-diphosphate Delta-isomerase 1"/>
    <property type="match status" value="1"/>
</dbReference>
<dbReference type="Gene3D" id="3.90.79.10">
    <property type="entry name" value="Nucleoside Triphosphate Pyrophosphohydrolase"/>
    <property type="match status" value="1"/>
</dbReference>
<dbReference type="InterPro" id="IPR011876">
    <property type="entry name" value="IsopentenylPP_isomerase_typ1"/>
</dbReference>
<dbReference type="InterPro" id="IPR015797">
    <property type="entry name" value="NUDIX_hydrolase-like_dom_sf"/>
</dbReference>
<dbReference type="InterPro" id="IPR000086">
    <property type="entry name" value="NUDIX_hydrolase_dom"/>
</dbReference>
<dbReference type="NCBIfam" id="TIGR02150">
    <property type="entry name" value="IPP_isom_1"/>
    <property type="match status" value="1"/>
</dbReference>
<dbReference type="PANTHER" id="PTHR10885">
    <property type="entry name" value="ISOPENTENYL-DIPHOSPHATE DELTA-ISOMERASE"/>
    <property type="match status" value="1"/>
</dbReference>
<dbReference type="PANTHER" id="PTHR10885:SF1">
    <property type="entry name" value="ISOPENTENYL-DIPHOSPHATE DELTA-ISOMERASE 2"/>
    <property type="match status" value="1"/>
</dbReference>
<dbReference type="Pfam" id="PF00293">
    <property type="entry name" value="NUDIX"/>
    <property type="match status" value="1"/>
</dbReference>
<dbReference type="PIRSF" id="PIRSF018427">
    <property type="entry name" value="Isopntndiph_ism"/>
    <property type="match status" value="1"/>
</dbReference>
<dbReference type="SUPFAM" id="SSF55811">
    <property type="entry name" value="Nudix"/>
    <property type="match status" value="1"/>
</dbReference>
<dbReference type="PROSITE" id="PS51462">
    <property type="entry name" value="NUDIX"/>
    <property type="match status" value="1"/>
</dbReference>
<reference key="1">
    <citation type="journal article" date="2007" name="J. Biol. Chem.">
        <title>IDI2, a second isopentenyl diphosphate isomerase in mammals.</title>
        <authorList>
            <person name="Clizbe D.B."/>
            <person name="Owens M.L."/>
            <person name="Masuda K.R."/>
            <person name="Shackelford J.E."/>
            <person name="Krisans S.K."/>
        </authorList>
    </citation>
    <scope>NUCLEOTIDE SEQUENCE [GENOMIC DNA]</scope>
    <scope>FUNCTION</scope>
    <scope>SUBCELLULAR LOCATION</scope>
    <scope>TISSUE SPECIFICITY</scope>
    <scope>CATALYTIC ACTIVITY</scope>
    <scope>BIOPHYSICOCHEMICAL PROPERTIES</scope>
    <scope>INDUCTION</scope>
    <scope>PATHWAY</scope>
</reference>
<reference key="2">
    <citation type="journal article" date="2004" name="Nat. Genet.">
        <title>Complete sequencing and characterization of 21,243 full-length human cDNAs.</title>
        <authorList>
            <person name="Ota T."/>
            <person name="Suzuki Y."/>
            <person name="Nishikawa T."/>
            <person name="Otsuki T."/>
            <person name="Sugiyama T."/>
            <person name="Irie R."/>
            <person name="Wakamatsu A."/>
            <person name="Hayashi K."/>
            <person name="Sato H."/>
            <person name="Nagai K."/>
            <person name="Kimura K."/>
            <person name="Makita H."/>
            <person name="Sekine M."/>
            <person name="Obayashi M."/>
            <person name="Nishi T."/>
            <person name="Shibahara T."/>
            <person name="Tanaka T."/>
            <person name="Ishii S."/>
            <person name="Yamamoto J."/>
            <person name="Saito K."/>
            <person name="Kawai Y."/>
            <person name="Isono Y."/>
            <person name="Nakamura Y."/>
            <person name="Nagahari K."/>
            <person name="Murakami K."/>
            <person name="Yasuda T."/>
            <person name="Iwayanagi T."/>
            <person name="Wagatsuma M."/>
            <person name="Shiratori A."/>
            <person name="Sudo H."/>
            <person name="Hosoiri T."/>
            <person name="Kaku Y."/>
            <person name="Kodaira H."/>
            <person name="Kondo H."/>
            <person name="Sugawara M."/>
            <person name="Takahashi M."/>
            <person name="Kanda K."/>
            <person name="Yokoi T."/>
            <person name="Furuya T."/>
            <person name="Kikkawa E."/>
            <person name="Omura Y."/>
            <person name="Abe K."/>
            <person name="Kamihara K."/>
            <person name="Katsuta N."/>
            <person name="Sato K."/>
            <person name="Tanikawa M."/>
            <person name="Yamazaki M."/>
            <person name="Ninomiya K."/>
            <person name="Ishibashi T."/>
            <person name="Yamashita H."/>
            <person name="Murakawa K."/>
            <person name="Fujimori K."/>
            <person name="Tanai H."/>
            <person name="Kimata M."/>
            <person name="Watanabe M."/>
            <person name="Hiraoka S."/>
            <person name="Chiba Y."/>
            <person name="Ishida S."/>
            <person name="Ono Y."/>
            <person name="Takiguchi S."/>
            <person name="Watanabe S."/>
            <person name="Yosida M."/>
            <person name="Hotuta T."/>
            <person name="Kusano J."/>
            <person name="Kanehori K."/>
            <person name="Takahashi-Fujii A."/>
            <person name="Hara H."/>
            <person name="Tanase T.-O."/>
            <person name="Nomura Y."/>
            <person name="Togiya S."/>
            <person name="Komai F."/>
            <person name="Hara R."/>
            <person name="Takeuchi K."/>
            <person name="Arita M."/>
            <person name="Imose N."/>
            <person name="Musashino K."/>
            <person name="Yuuki H."/>
            <person name="Oshima A."/>
            <person name="Sasaki N."/>
            <person name="Aotsuka S."/>
            <person name="Yoshikawa Y."/>
            <person name="Matsunawa H."/>
            <person name="Ichihara T."/>
            <person name="Shiohata N."/>
            <person name="Sano S."/>
            <person name="Moriya S."/>
            <person name="Momiyama H."/>
            <person name="Satoh N."/>
            <person name="Takami S."/>
            <person name="Terashima Y."/>
            <person name="Suzuki O."/>
            <person name="Nakagawa S."/>
            <person name="Senoh A."/>
            <person name="Mizoguchi H."/>
            <person name="Goto Y."/>
            <person name="Shimizu F."/>
            <person name="Wakebe H."/>
            <person name="Hishigaki H."/>
            <person name="Watanabe T."/>
            <person name="Sugiyama A."/>
            <person name="Takemoto M."/>
            <person name="Kawakami B."/>
            <person name="Yamazaki M."/>
            <person name="Watanabe K."/>
            <person name="Kumagai A."/>
            <person name="Itakura S."/>
            <person name="Fukuzumi Y."/>
            <person name="Fujimori Y."/>
            <person name="Komiyama M."/>
            <person name="Tashiro H."/>
            <person name="Tanigami A."/>
            <person name="Fujiwara T."/>
            <person name="Ono T."/>
            <person name="Yamada K."/>
            <person name="Fujii Y."/>
            <person name="Ozaki K."/>
            <person name="Hirao M."/>
            <person name="Ohmori Y."/>
            <person name="Kawabata A."/>
            <person name="Hikiji T."/>
            <person name="Kobatake N."/>
            <person name="Inagaki H."/>
            <person name="Ikema Y."/>
            <person name="Okamoto S."/>
            <person name="Okitani R."/>
            <person name="Kawakami T."/>
            <person name="Noguchi S."/>
            <person name="Itoh T."/>
            <person name="Shigeta K."/>
            <person name="Senba T."/>
            <person name="Matsumura K."/>
            <person name="Nakajima Y."/>
            <person name="Mizuno T."/>
            <person name="Morinaga M."/>
            <person name="Sasaki M."/>
            <person name="Togashi T."/>
            <person name="Oyama M."/>
            <person name="Hata H."/>
            <person name="Watanabe M."/>
            <person name="Komatsu T."/>
            <person name="Mizushima-Sugano J."/>
            <person name="Satoh T."/>
            <person name="Shirai Y."/>
            <person name="Takahashi Y."/>
            <person name="Nakagawa K."/>
            <person name="Okumura K."/>
            <person name="Nagase T."/>
            <person name="Nomura N."/>
            <person name="Kikuchi H."/>
            <person name="Masuho Y."/>
            <person name="Yamashita R."/>
            <person name="Nakai K."/>
            <person name="Yada T."/>
            <person name="Nakamura Y."/>
            <person name="Ohara O."/>
            <person name="Isogai T."/>
            <person name="Sugano S."/>
        </authorList>
    </citation>
    <scope>NUCLEOTIDE SEQUENCE [LARGE SCALE MRNA]</scope>
    <source>
        <tissue>Skeletal muscle</tissue>
    </source>
</reference>
<reference key="3">
    <citation type="journal article" date="2004" name="Genome Res.">
        <title>The status, quality, and expansion of the NIH full-length cDNA project: the Mammalian Gene Collection (MGC).</title>
        <authorList>
            <consortium name="The MGC Project Team"/>
        </authorList>
    </citation>
    <scope>NUCLEOTIDE SEQUENCE [LARGE SCALE MRNA]</scope>
    <source>
        <tissue>Skeletal muscle</tissue>
    </source>
</reference>
<accession>Q9BXS1</accession>
<gene>
    <name type="primary">IDI2</name>
</gene>
<organism>
    <name type="scientific">Homo sapiens</name>
    <name type="common">Human</name>
    <dbReference type="NCBI Taxonomy" id="9606"/>
    <lineage>
        <taxon>Eukaryota</taxon>
        <taxon>Metazoa</taxon>
        <taxon>Chordata</taxon>
        <taxon>Craniata</taxon>
        <taxon>Vertebrata</taxon>
        <taxon>Euteleostomi</taxon>
        <taxon>Mammalia</taxon>
        <taxon>Eutheria</taxon>
        <taxon>Euarchontoglires</taxon>
        <taxon>Primates</taxon>
        <taxon>Haplorrhini</taxon>
        <taxon>Catarrhini</taxon>
        <taxon>Hominidae</taxon>
        <taxon>Homo</taxon>
    </lineage>
</organism>
<sequence>MSDINLDWVDRRQLQRLEEMLIVVDENDKVIGADTKRNCHLNENIEKGLLHRAFSVVLFNTKNRILIQQRSDTKVTFPGYFTDSCSSHPLYNPAELEEKDAIGVRRAAQRRLQAELGIPGEQISPEDIVFMTIYHHKAKSDRIWGEHEICYLLLVRKNVTLNPDPSETKSILYLSQEELWELLEREARGEVKVTPWLRTIAERFLYRWWPHLDDVTPFVELHKIHRV</sequence>
<comment type="function">
    <text evidence="4">Catalyzes the 1,3-allylic rearrangement of the homoallylic substrate isopentenyl (IPP) to its highly electrophilic allylic isomer, dimethylallyl diphosphate (DMAPP).</text>
</comment>
<comment type="catalytic activity">
    <reaction evidence="4">
        <text>isopentenyl diphosphate = dimethylallyl diphosphate</text>
        <dbReference type="Rhea" id="RHEA:23284"/>
        <dbReference type="ChEBI" id="CHEBI:57623"/>
        <dbReference type="ChEBI" id="CHEBI:128769"/>
        <dbReference type="EC" id="5.3.3.2"/>
    </reaction>
</comment>
<comment type="cofactor">
    <cofactor evidence="4">
        <name>Mg(2+)</name>
        <dbReference type="ChEBI" id="CHEBI:18420"/>
    </cofactor>
    <text evidence="1">Binds 1 Mg(2+) ion per subunit.</text>
</comment>
<comment type="biophysicochemical properties">
    <kinetics>
        <KM evidence="4">22.8 uM for isopentenyl</KM>
        <Vmax evidence="4">0.12 umol/min/mg enzyme with isopentenyl as substrate</Vmax>
    </kinetics>
    <phDependence>
        <text evidence="4">Optimum pH is 8.0.</text>
    </phDependence>
</comment>
<comment type="pathway">
    <text evidence="4">Isoprenoid biosynthesis; dimethylallyl diphosphate biosynthesis; dimethylallyl diphosphate from isopentenyl diphosphate: step 1/1.</text>
</comment>
<comment type="interaction">
    <interactant intactId="EBI-766127">
        <id>Q9BXS1</id>
    </interactant>
    <interactant intactId="EBI-11979761">
        <id>Q86U70-2</id>
        <label>LDB1</label>
    </interactant>
    <organismsDiffer>false</organismsDiffer>
    <experiments>4</experiments>
</comment>
<comment type="subcellular location">
    <subcellularLocation>
        <location evidence="4">Peroxisome</location>
    </subcellularLocation>
</comment>
<comment type="tissue specificity">
    <text evidence="4">Muscle-specific expression.</text>
</comment>
<comment type="similarity">
    <text evidence="5">Belongs to the IPP isomerase type 1 family.</text>
</comment>
<proteinExistence type="evidence at protein level"/>
<feature type="chain" id="PRO_0000205228" description="Isopentenyl-diphosphate delta-isomerase 2">
    <location>
        <begin position="1"/>
        <end position="227"/>
    </location>
</feature>
<feature type="domain" description="Nudix hydrolase" evidence="3">
    <location>
        <begin position="49"/>
        <end position="199"/>
    </location>
</feature>
<feature type="short sequence motif" description="Microbody targeting signal" evidence="2">
    <location>
        <begin position="225"/>
        <end position="227"/>
    </location>
</feature>
<feature type="active site" evidence="1">
    <location>
        <position position="86"/>
    </location>
</feature>
<feature type="active site" evidence="1">
    <location>
        <position position="148"/>
    </location>
</feature>
<feature type="binding site" evidence="1">
    <location>
        <position position="36"/>
    </location>
    <ligand>
        <name>substrate</name>
    </ligand>
</feature>
<feature type="binding site" evidence="1">
    <location>
        <position position="40"/>
    </location>
    <ligand>
        <name>Mg(2+)</name>
        <dbReference type="ChEBI" id="CHEBI:18420"/>
    </ligand>
</feature>
<feature type="binding site" evidence="1">
    <location>
        <position position="51"/>
    </location>
    <ligand>
        <name>Mg(2+)</name>
        <dbReference type="ChEBI" id="CHEBI:18420"/>
    </ligand>
</feature>
<feature type="binding site" evidence="1">
    <location>
        <position position="70"/>
    </location>
    <ligand>
        <name>substrate</name>
    </ligand>
</feature>
<feature type="binding site" evidence="1">
    <location>
        <position position="74"/>
    </location>
    <ligand>
        <name>substrate</name>
    </ligand>
</feature>
<feature type="binding site" evidence="1">
    <location>
        <position position="87"/>
    </location>
    <ligand>
        <name>substrate</name>
    </ligand>
</feature>
<feature type="binding site" evidence="1">
    <location>
        <position position="146"/>
    </location>
    <ligand>
        <name>Mg(2+)</name>
        <dbReference type="ChEBI" id="CHEBI:18420"/>
    </ligand>
</feature>
<feature type="binding site" evidence="1">
    <location>
        <position position="148"/>
    </location>
    <ligand>
        <name>Mg(2+)</name>
        <dbReference type="ChEBI" id="CHEBI:18420"/>
    </ligand>
</feature>
<feature type="helix" evidence="6">
    <location>
        <begin position="1"/>
        <end position="4"/>
    </location>
</feature>
<feature type="helix" evidence="6">
    <location>
        <begin position="11"/>
        <end position="16"/>
    </location>
</feature>
<feature type="strand" evidence="6">
    <location>
        <begin position="20"/>
        <end position="24"/>
    </location>
</feature>
<feature type="strand" evidence="6">
    <location>
        <begin position="30"/>
        <end position="35"/>
    </location>
</feature>
<feature type="helix" evidence="6">
    <location>
        <begin position="36"/>
        <end position="39"/>
    </location>
</feature>
<feature type="helix" evidence="6">
    <location>
        <begin position="42"/>
        <end position="45"/>
    </location>
</feature>
<feature type="turn" evidence="6">
    <location>
        <begin position="46"/>
        <end position="48"/>
    </location>
</feature>
<feature type="strand" evidence="6">
    <location>
        <begin position="51"/>
        <end position="59"/>
    </location>
</feature>
<feature type="strand" evidence="6">
    <location>
        <begin position="65"/>
        <end position="70"/>
    </location>
</feature>
<feature type="strand" evidence="6">
    <location>
        <begin position="75"/>
        <end position="77"/>
    </location>
</feature>
<feature type="strand" evidence="6">
    <location>
        <begin position="84"/>
        <end position="87"/>
    </location>
</feature>
<feature type="strand" evidence="6">
    <location>
        <begin position="90"/>
        <end position="92"/>
    </location>
</feature>
<feature type="helix" evidence="6">
    <location>
        <begin position="93"/>
        <end position="96"/>
    </location>
</feature>
<feature type="helix" evidence="6">
    <location>
        <begin position="99"/>
        <end position="101"/>
    </location>
</feature>
<feature type="helix" evidence="6">
    <location>
        <begin position="102"/>
        <end position="116"/>
    </location>
</feature>
<feature type="turn" evidence="6">
    <location>
        <begin position="120"/>
        <end position="122"/>
    </location>
</feature>
<feature type="helix" evidence="6">
    <location>
        <begin position="125"/>
        <end position="127"/>
    </location>
</feature>
<feature type="strand" evidence="6">
    <location>
        <begin position="128"/>
        <end position="156"/>
    </location>
</feature>
<feature type="turn" evidence="6">
    <location>
        <begin position="165"/>
        <end position="167"/>
    </location>
</feature>
<feature type="strand" evidence="6">
    <location>
        <begin position="168"/>
        <end position="174"/>
    </location>
</feature>
<feature type="helix" evidence="6">
    <location>
        <begin position="176"/>
        <end position="188"/>
    </location>
</feature>
<feature type="helix" evidence="6">
    <location>
        <begin position="195"/>
        <end position="203"/>
    </location>
</feature>
<feature type="helix" evidence="6">
    <location>
        <begin position="205"/>
        <end position="208"/>
    </location>
</feature>
<feature type="helix" evidence="6">
    <location>
        <begin position="209"/>
        <end position="211"/>
    </location>
</feature>
<feature type="helix" evidence="6">
    <location>
        <begin position="216"/>
        <end position="218"/>
    </location>
</feature>
<protein>
    <recommendedName>
        <fullName>Isopentenyl-diphosphate delta-isomerase 2</fullName>
        <ecNumber evidence="4">5.3.3.2</ecNumber>
    </recommendedName>
    <alternativeName>
        <fullName>Isopentenyl pyrophosphate isomerase 2</fullName>
        <shortName>IPP isomerase 2</shortName>
        <shortName>IPPI2</shortName>
    </alternativeName>
</protein>
<keyword id="KW-0002">3D-structure</keyword>
<keyword id="KW-0152">Cholesterol biosynthesis</keyword>
<keyword id="KW-0153">Cholesterol metabolism</keyword>
<keyword id="KW-0413">Isomerase</keyword>
<keyword id="KW-0414">Isoprene biosynthesis</keyword>
<keyword id="KW-0444">Lipid biosynthesis</keyword>
<keyword id="KW-0443">Lipid metabolism</keyword>
<keyword id="KW-0460">Magnesium</keyword>
<keyword id="KW-0479">Metal-binding</keyword>
<keyword id="KW-0576">Peroxisome</keyword>
<keyword id="KW-1267">Proteomics identification</keyword>
<keyword id="KW-1185">Reference proteome</keyword>
<keyword id="KW-0752">Steroid biosynthesis</keyword>
<keyword id="KW-0753">Steroid metabolism</keyword>
<keyword id="KW-0756">Sterol biosynthesis</keyword>
<keyword id="KW-1207">Sterol metabolism</keyword>
<name>IDI2_HUMAN</name>